<dbReference type="EC" id="3.5.4.28" evidence="1"/>
<dbReference type="EC" id="3.5.4.31" evidence="1"/>
<dbReference type="EMBL" id="AE000782">
    <property type="protein sequence ID" value="AAB90684.1"/>
    <property type="molecule type" value="Genomic_DNA"/>
</dbReference>
<dbReference type="PIR" id="F69318">
    <property type="entry name" value="F69318"/>
</dbReference>
<dbReference type="RefSeq" id="WP_010878057.1">
    <property type="nucleotide sequence ID" value="NC_000917.1"/>
</dbReference>
<dbReference type="SMR" id="O29701"/>
<dbReference type="STRING" id="224325.AF_0550"/>
<dbReference type="PaxDb" id="224325-AF_0550"/>
<dbReference type="EnsemblBacteria" id="AAB90684">
    <property type="protein sequence ID" value="AAB90684"/>
    <property type="gene ID" value="AF_0550"/>
</dbReference>
<dbReference type="GeneID" id="1483766"/>
<dbReference type="KEGG" id="afu:AF_0550"/>
<dbReference type="eggNOG" id="arCOG00695">
    <property type="taxonomic scope" value="Archaea"/>
</dbReference>
<dbReference type="HOGENOM" id="CLU_012358_2_1_2"/>
<dbReference type="OrthoDB" id="372084at2157"/>
<dbReference type="PhylomeDB" id="O29701"/>
<dbReference type="Proteomes" id="UP000002199">
    <property type="component" value="Chromosome"/>
</dbReference>
<dbReference type="GO" id="GO:0090614">
    <property type="term" value="F:5'-methylthioadenosine deaminase activity"/>
    <property type="evidence" value="ECO:0007669"/>
    <property type="project" value="UniProtKB-UniRule"/>
</dbReference>
<dbReference type="GO" id="GO:0046872">
    <property type="term" value="F:metal ion binding"/>
    <property type="evidence" value="ECO:0007669"/>
    <property type="project" value="UniProtKB-KW"/>
</dbReference>
<dbReference type="GO" id="GO:0050270">
    <property type="term" value="F:S-adenosylhomocysteine deaminase activity"/>
    <property type="evidence" value="ECO:0007669"/>
    <property type="project" value="UniProtKB-UniRule"/>
</dbReference>
<dbReference type="CDD" id="cd01298">
    <property type="entry name" value="ATZ_TRZ_like"/>
    <property type="match status" value="1"/>
</dbReference>
<dbReference type="FunFam" id="3.20.20.140:FF:000014">
    <property type="entry name" value="5-methylthioadenosine/S-adenosylhomocysteine deaminase"/>
    <property type="match status" value="1"/>
</dbReference>
<dbReference type="Gene3D" id="3.20.20.140">
    <property type="entry name" value="Metal-dependent hydrolases"/>
    <property type="match status" value="1"/>
</dbReference>
<dbReference type="Gene3D" id="2.30.40.10">
    <property type="entry name" value="Urease, subunit C, domain 1"/>
    <property type="match status" value="1"/>
</dbReference>
<dbReference type="HAMAP" id="MF_01281">
    <property type="entry name" value="MTA_SAH_deamin"/>
    <property type="match status" value="1"/>
</dbReference>
<dbReference type="InterPro" id="IPR006680">
    <property type="entry name" value="Amidohydro-rel"/>
</dbReference>
<dbReference type="InterPro" id="IPR023512">
    <property type="entry name" value="Deaminase_MtaD/DadD"/>
</dbReference>
<dbReference type="InterPro" id="IPR011059">
    <property type="entry name" value="Metal-dep_hydrolase_composite"/>
</dbReference>
<dbReference type="InterPro" id="IPR032466">
    <property type="entry name" value="Metal_Hydrolase"/>
</dbReference>
<dbReference type="InterPro" id="IPR050287">
    <property type="entry name" value="MTA/SAH_deaminase"/>
</dbReference>
<dbReference type="PANTHER" id="PTHR43794:SF11">
    <property type="entry name" value="AMIDOHYDROLASE-RELATED DOMAIN-CONTAINING PROTEIN"/>
    <property type="match status" value="1"/>
</dbReference>
<dbReference type="PANTHER" id="PTHR43794">
    <property type="entry name" value="AMINOHYDROLASE SSNA-RELATED"/>
    <property type="match status" value="1"/>
</dbReference>
<dbReference type="Pfam" id="PF01979">
    <property type="entry name" value="Amidohydro_1"/>
    <property type="match status" value="1"/>
</dbReference>
<dbReference type="SUPFAM" id="SSF51338">
    <property type="entry name" value="Composite domain of metallo-dependent hydrolases"/>
    <property type="match status" value="1"/>
</dbReference>
<dbReference type="SUPFAM" id="SSF51556">
    <property type="entry name" value="Metallo-dependent hydrolases"/>
    <property type="match status" value="1"/>
</dbReference>
<keyword id="KW-0378">Hydrolase</keyword>
<keyword id="KW-0479">Metal-binding</keyword>
<keyword id="KW-1185">Reference proteome</keyword>
<keyword id="KW-0862">Zinc</keyword>
<protein>
    <recommendedName>
        <fullName evidence="1">5-methylthioadenosine/S-adenosylhomocysteine deaminase 1</fullName>
        <shortName evidence="1">MTA/SAH deaminase 1</shortName>
        <ecNumber evidence="1">3.5.4.28</ecNumber>
        <ecNumber evidence="1">3.5.4.31</ecNumber>
    </recommendedName>
</protein>
<accession>O29701</accession>
<evidence type="ECO:0000255" key="1">
    <source>
        <dbReference type="HAMAP-Rule" id="MF_01281"/>
    </source>
</evidence>
<feature type="chain" id="PRO_0000122308" description="5-methylthioadenosine/S-adenosylhomocysteine deaminase 1">
    <location>
        <begin position="1"/>
        <end position="422"/>
    </location>
</feature>
<feature type="binding site" evidence="1">
    <location>
        <position position="56"/>
    </location>
    <ligand>
        <name>Zn(2+)</name>
        <dbReference type="ChEBI" id="CHEBI:29105"/>
    </ligand>
</feature>
<feature type="binding site" evidence="1">
    <location>
        <position position="58"/>
    </location>
    <ligand>
        <name>Zn(2+)</name>
        <dbReference type="ChEBI" id="CHEBI:29105"/>
    </ligand>
</feature>
<feature type="binding site" evidence="1">
    <location>
        <position position="85"/>
    </location>
    <ligand>
        <name>substrate</name>
    </ligand>
</feature>
<feature type="binding site" evidence="1">
    <location>
        <position position="174"/>
    </location>
    <ligand>
        <name>substrate</name>
    </ligand>
</feature>
<feature type="binding site" evidence="1">
    <location>
        <position position="201"/>
    </location>
    <ligand>
        <name>Zn(2+)</name>
        <dbReference type="ChEBI" id="CHEBI:29105"/>
    </ligand>
</feature>
<feature type="binding site" evidence="1">
    <location>
        <position position="204"/>
    </location>
    <ligand>
        <name>substrate</name>
    </ligand>
</feature>
<feature type="binding site" evidence="1">
    <location>
        <position position="290"/>
    </location>
    <ligand>
        <name>substrate</name>
    </ligand>
</feature>
<feature type="binding site" evidence="1">
    <location>
        <position position="290"/>
    </location>
    <ligand>
        <name>Zn(2+)</name>
        <dbReference type="ChEBI" id="CHEBI:29105"/>
    </ligand>
</feature>
<comment type="function">
    <text evidence="1">Catalyzes the deamination of 5-methylthioadenosine and S-adenosyl-L-homocysteine into 5-methylthioinosine and S-inosyl-L-homocysteine, respectively. Is also able to deaminate adenosine.</text>
</comment>
<comment type="catalytic activity">
    <reaction evidence="1">
        <text>S-adenosyl-L-homocysteine + H2O + H(+) = S-inosyl-L-homocysteine + NH4(+)</text>
        <dbReference type="Rhea" id="RHEA:20716"/>
        <dbReference type="ChEBI" id="CHEBI:15377"/>
        <dbReference type="ChEBI" id="CHEBI:15378"/>
        <dbReference type="ChEBI" id="CHEBI:28938"/>
        <dbReference type="ChEBI" id="CHEBI:57856"/>
        <dbReference type="ChEBI" id="CHEBI:57985"/>
        <dbReference type="EC" id="3.5.4.28"/>
    </reaction>
</comment>
<comment type="catalytic activity">
    <reaction evidence="1">
        <text>S-methyl-5'-thioadenosine + H2O + H(+) = S-methyl-5'-thioinosine + NH4(+)</text>
        <dbReference type="Rhea" id="RHEA:25025"/>
        <dbReference type="ChEBI" id="CHEBI:15377"/>
        <dbReference type="ChEBI" id="CHEBI:15378"/>
        <dbReference type="ChEBI" id="CHEBI:17509"/>
        <dbReference type="ChEBI" id="CHEBI:28938"/>
        <dbReference type="ChEBI" id="CHEBI:48595"/>
        <dbReference type="EC" id="3.5.4.31"/>
    </reaction>
</comment>
<comment type="cofactor">
    <cofactor evidence="1">
        <name>Zn(2+)</name>
        <dbReference type="ChEBI" id="CHEBI:29105"/>
    </cofactor>
    <text evidence="1">Binds 1 zinc ion per subunit.</text>
</comment>
<comment type="similarity">
    <text evidence="1">Belongs to the metallo-dependent hydrolases superfamily. MTA/SAH deaminase family.</text>
</comment>
<gene>
    <name evidence="1" type="primary">mtaD1</name>
    <name type="ordered locus">AF_0550</name>
</gene>
<name>MTAD1_ARCFU</name>
<reference key="1">
    <citation type="journal article" date="1997" name="Nature">
        <title>The complete genome sequence of the hyperthermophilic, sulphate-reducing archaeon Archaeoglobus fulgidus.</title>
        <authorList>
            <person name="Klenk H.-P."/>
            <person name="Clayton R.A."/>
            <person name="Tomb J.-F."/>
            <person name="White O."/>
            <person name="Nelson K.E."/>
            <person name="Ketchum K.A."/>
            <person name="Dodson R.J."/>
            <person name="Gwinn M.L."/>
            <person name="Hickey E.K."/>
            <person name="Peterson J.D."/>
            <person name="Richardson D.L."/>
            <person name="Kerlavage A.R."/>
            <person name="Graham D.E."/>
            <person name="Kyrpides N.C."/>
            <person name="Fleischmann R.D."/>
            <person name="Quackenbush J."/>
            <person name="Lee N.H."/>
            <person name="Sutton G.G."/>
            <person name="Gill S.R."/>
            <person name="Kirkness E.F."/>
            <person name="Dougherty B.A."/>
            <person name="McKenney K."/>
            <person name="Adams M.D."/>
            <person name="Loftus B.J."/>
            <person name="Peterson S.N."/>
            <person name="Reich C.I."/>
            <person name="McNeil L.K."/>
            <person name="Badger J.H."/>
            <person name="Glodek A."/>
            <person name="Zhou L."/>
            <person name="Overbeek R."/>
            <person name="Gocayne J.D."/>
            <person name="Weidman J.F."/>
            <person name="McDonald L.A."/>
            <person name="Utterback T.R."/>
            <person name="Cotton M.D."/>
            <person name="Spriggs T."/>
            <person name="Artiach P."/>
            <person name="Kaine B.P."/>
            <person name="Sykes S.M."/>
            <person name="Sadow P.W."/>
            <person name="D'Andrea K.P."/>
            <person name="Bowman C."/>
            <person name="Fujii C."/>
            <person name="Garland S.A."/>
            <person name="Mason T.M."/>
            <person name="Olsen G.J."/>
            <person name="Fraser C.M."/>
            <person name="Smith H.O."/>
            <person name="Woese C.R."/>
            <person name="Venter J.C."/>
        </authorList>
    </citation>
    <scope>NUCLEOTIDE SEQUENCE [LARGE SCALE GENOMIC DNA]</scope>
    <source>
        <strain>ATCC 49558 / DSM 4304 / JCM 9628 / NBRC 100126 / VC-16</strain>
    </source>
</reference>
<sequence length="422" mass="46595">MILIKNAKILTPKGIVEGNLKVEGKKISEIGGKAVKSDVVIDGSRKAVIPGFFNTHTHAAMTLFRSYADDMQLHEWLEKKIWPLEAKLDDKAVYWGTKLACVEMLKSGTVFFNDMYFFPEAIARAAEECGIRACVSAAFFDFFNPDLLELNLKNAVKSLREIEKYDVLRAIGPHAVYTVSLDGLRRAAEIAEEMDIFMHFHLAETEKEVLDFKKQHGKLIVQALDEIGFLSKRLIAAHSVWLEDAEIEILAKKGVSVAHCPASNMKLCVGKAIRYEAMKRAGVNFTLATDGAASNNNLDMLEEMKFAALLQKFHHSNPTLLKAEEVFEAATLNGAKAFGIKSGVIKEGYEADIVLVDLAKPYMQPEHSLIANLVYAASSGCVDTVIVKGEVVVEGGVFRSEEEELKIIEKANEVAKRLTGSA</sequence>
<organism>
    <name type="scientific">Archaeoglobus fulgidus (strain ATCC 49558 / DSM 4304 / JCM 9628 / NBRC 100126 / VC-16)</name>
    <dbReference type="NCBI Taxonomy" id="224325"/>
    <lineage>
        <taxon>Archaea</taxon>
        <taxon>Methanobacteriati</taxon>
        <taxon>Methanobacteriota</taxon>
        <taxon>Archaeoglobi</taxon>
        <taxon>Archaeoglobales</taxon>
        <taxon>Archaeoglobaceae</taxon>
        <taxon>Archaeoglobus</taxon>
    </lineage>
</organism>
<proteinExistence type="inferred from homology"/>